<keyword id="KW-0067">ATP-binding</keyword>
<keyword id="KW-0963">Cytoplasm</keyword>
<keyword id="KW-0235">DNA replication</keyword>
<keyword id="KW-0238">DNA-binding</keyword>
<keyword id="KW-0446">Lipid-binding</keyword>
<keyword id="KW-0547">Nucleotide-binding</keyword>
<comment type="function">
    <text evidence="1">Plays an essential role in the initiation and regulation of chromosomal replication. ATP-DnaA binds to the origin of replication (oriC) to initiate formation of the DNA replication initiation complex once per cell cycle. Binds the DnaA box (a 9 base pair repeat at the origin) and separates the double-stranded (ds)DNA. Forms a right-handed helical filament on oriC DNA; dsDNA binds to the exterior of the filament while single-stranded (ss)DNA is stabiized in the filament's interior. The ATP-DnaA-oriC complex binds and stabilizes one strand of the AT-rich DNA unwinding element (DUE), permitting loading of DNA polymerase. After initiation quickly degrades to an ADP-DnaA complex that is not apt for DNA replication. Binds acidic phospholipids.</text>
</comment>
<comment type="subunit">
    <text evidence="1">Oligomerizes as a right-handed, spiral filament on DNA at oriC.</text>
</comment>
<comment type="subcellular location">
    <subcellularLocation>
        <location evidence="1">Cytoplasm</location>
    </subcellularLocation>
</comment>
<comment type="domain">
    <text evidence="1">Domain I is involved in oligomerization and binding regulators, domain II is flexibile and of varying length in different bacteria, domain III forms the AAA+ region, while domain IV binds dsDNA.</text>
</comment>
<comment type="similarity">
    <text evidence="1">Belongs to the DnaA family.</text>
</comment>
<protein>
    <recommendedName>
        <fullName evidence="1">Chromosomal replication initiator protein DnaA</fullName>
    </recommendedName>
</protein>
<organism>
    <name type="scientific">Legionella pneumophila (strain Paris)</name>
    <dbReference type="NCBI Taxonomy" id="297246"/>
    <lineage>
        <taxon>Bacteria</taxon>
        <taxon>Pseudomonadati</taxon>
        <taxon>Pseudomonadota</taxon>
        <taxon>Gammaproteobacteria</taxon>
        <taxon>Legionellales</taxon>
        <taxon>Legionellaceae</taxon>
        <taxon>Legionella</taxon>
    </lineage>
</organism>
<dbReference type="EMBL" id="CR628336">
    <property type="protein sequence ID" value="CAH11149.1"/>
    <property type="molecule type" value="Genomic_DNA"/>
</dbReference>
<dbReference type="RefSeq" id="WP_010945763.1">
    <property type="nucleotide sequence ID" value="NC_006368.1"/>
</dbReference>
<dbReference type="SMR" id="Q5X990"/>
<dbReference type="GeneID" id="57034007"/>
<dbReference type="KEGG" id="lpp:lpp0001"/>
<dbReference type="LegioList" id="lpp0001"/>
<dbReference type="HOGENOM" id="CLU_026910_0_1_6"/>
<dbReference type="GO" id="GO:0005737">
    <property type="term" value="C:cytoplasm"/>
    <property type="evidence" value="ECO:0007669"/>
    <property type="project" value="UniProtKB-SubCell"/>
</dbReference>
<dbReference type="GO" id="GO:0005886">
    <property type="term" value="C:plasma membrane"/>
    <property type="evidence" value="ECO:0007669"/>
    <property type="project" value="TreeGrafter"/>
</dbReference>
<dbReference type="GO" id="GO:0005524">
    <property type="term" value="F:ATP binding"/>
    <property type="evidence" value="ECO:0007669"/>
    <property type="project" value="UniProtKB-UniRule"/>
</dbReference>
<dbReference type="GO" id="GO:0016887">
    <property type="term" value="F:ATP hydrolysis activity"/>
    <property type="evidence" value="ECO:0007669"/>
    <property type="project" value="InterPro"/>
</dbReference>
<dbReference type="GO" id="GO:0003688">
    <property type="term" value="F:DNA replication origin binding"/>
    <property type="evidence" value="ECO:0007669"/>
    <property type="project" value="UniProtKB-UniRule"/>
</dbReference>
<dbReference type="GO" id="GO:0008289">
    <property type="term" value="F:lipid binding"/>
    <property type="evidence" value="ECO:0007669"/>
    <property type="project" value="UniProtKB-KW"/>
</dbReference>
<dbReference type="GO" id="GO:0006270">
    <property type="term" value="P:DNA replication initiation"/>
    <property type="evidence" value="ECO:0007669"/>
    <property type="project" value="UniProtKB-UniRule"/>
</dbReference>
<dbReference type="GO" id="GO:0006275">
    <property type="term" value="P:regulation of DNA replication"/>
    <property type="evidence" value="ECO:0007669"/>
    <property type="project" value="UniProtKB-UniRule"/>
</dbReference>
<dbReference type="CDD" id="cd00009">
    <property type="entry name" value="AAA"/>
    <property type="match status" value="1"/>
</dbReference>
<dbReference type="CDD" id="cd06571">
    <property type="entry name" value="Bac_DnaA_C"/>
    <property type="match status" value="1"/>
</dbReference>
<dbReference type="FunFam" id="1.10.1750.10:FF:000001">
    <property type="entry name" value="Chromosomal replication initiator protein DnaA"/>
    <property type="match status" value="1"/>
</dbReference>
<dbReference type="FunFam" id="1.10.8.60:FF:000003">
    <property type="entry name" value="Chromosomal replication initiator protein DnaA"/>
    <property type="match status" value="1"/>
</dbReference>
<dbReference type="FunFam" id="3.40.50.300:FF:000103">
    <property type="entry name" value="Chromosomal replication initiator protein DnaA"/>
    <property type="match status" value="1"/>
</dbReference>
<dbReference type="Gene3D" id="1.10.1750.10">
    <property type="match status" value="1"/>
</dbReference>
<dbReference type="Gene3D" id="1.10.8.60">
    <property type="match status" value="1"/>
</dbReference>
<dbReference type="Gene3D" id="3.30.300.180">
    <property type="match status" value="1"/>
</dbReference>
<dbReference type="Gene3D" id="3.40.50.300">
    <property type="entry name" value="P-loop containing nucleotide triphosphate hydrolases"/>
    <property type="match status" value="1"/>
</dbReference>
<dbReference type="HAMAP" id="MF_00377">
    <property type="entry name" value="DnaA_bact"/>
    <property type="match status" value="1"/>
</dbReference>
<dbReference type="InterPro" id="IPR003593">
    <property type="entry name" value="AAA+_ATPase"/>
</dbReference>
<dbReference type="InterPro" id="IPR001957">
    <property type="entry name" value="Chromosome_initiator_DnaA"/>
</dbReference>
<dbReference type="InterPro" id="IPR020591">
    <property type="entry name" value="Chromosome_initiator_DnaA-like"/>
</dbReference>
<dbReference type="InterPro" id="IPR018312">
    <property type="entry name" value="Chromosome_initiator_DnaA_CS"/>
</dbReference>
<dbReference type="InterPro" id="IPR013159">
    <property type="entry name" value="DnaA_C"/>
</dbReference>
<dbReference type="InterPro" id="IPR013317">
    <property type="entry name" value="DnaA_dom"/>
</dbReference>
<dbReference type="InterPro" id="IPR024633">
    <property type="entry name" value="DnaA_N_dom"/>
</dbReference>
<dbReference type="InterPro" id="IPR038454">
    <property type="entry name" value="DnaA_N_sf"/>
</dbReference>
<dbReference type="InterPro" id="IPR027417">
    <property type="entry name" value="P-loop_NTPase"/>
</dbReference>
<dbReference type="InterPro" id="IPR010921">
    <property type="entry name" value="Trp_repressor/repl_initiator"/>
</dbReference>
<dbReference type="NCBIfam" id="TIGR00362">
    <property type="entry name" value="DnaA"/>
    <property type="match status" value="1"/>
</dbReference>
<dbReference type="PANTHER" id="PTHR30050">
    <property type="entry name" value="CHROMOSOMAL REPLICATION INITIATOR PROTEIN DNAA"/>
    <property type="match status" value="1"/>
</dbReference>
<dbReference type="PANTHER" id="PTHR30050:SF2">
    <property type="entry name" value="CHROMOSOMAL REPLICATION INITIATOR PROTEIN DNAA"/>
    <property type="match status" value="1"/>
</dbReference>
<dbReference type="Pfam" id="PF00308">
    <property type="entry name" value="Bac_DnaA"/>
    <property type="match status" value="1"/>
</dbReference>
<dbReference type="Pfam" id="PF08299">
    <property type="entry name" value="Bac_DnaA_C"/>
    <property type="match status" value="1"/>
</dbReference>
<dbReference type="Pfam" id="PF11638">
    <property type="entry name" value="DnaA_N"/>
    <property type="match status" value="1"/>
</dbReference>
<dbReference type="PRINTS" id="PR00051">
    <property type="entry name" value="DNAA"/>
</dbReference>
<dbReference type="SMART" id="SM00382">
    <property type="entry name" value="AAA"/>
    <property type="match status" value="1"/>
</dbReference>
<dbReference type="SMART" id="SM00760">
    <property type="entry name" value="Bac_DnaA_C"/>
    <property type="match status" value="1"/>
</dbReference>
<dbReference type="SUPFAM" id="SSF52540">
    <property type="entry name" value="P-loop containing nucleoside triphosphate hydrolases"/>
    <property type="match status" value="1"/>
</dbReference>
<dbReference type="SUPFAM" id="SSF48295">
    <property type="entry name" value="TrpR-like"/>
    <property type="match status" value="1"/>
</dbReference>
<dbReference type="PROSITE" id="PS01008">
    <property type="entry name" value="DNAA"/>
    <property type="match status" value="1"/>
</dbReference>
<gene>
    <name evidence="1" type="primary">dnaA</name>
    <name type="ordered locus">lpp0001</name>
</gene>
<sequence length="452" mass="51380">MSTTAWQKCLGLLQDEFSAQQFNTWLRPLQAYMDEQRLILLAPNRFVVDWVRKHFFSRIEELIKQFSGDDIKAISIEVGSKPVEAVDTPAETIVTSSSTAPLKSAPKKAVDYKSSHLNKKFVFDSFVEGNSNQLARAASMQVAERPGDAYNPLFIYGGVGLGKTHLMHAIGNSILKNNPEAKVLYLHSERFVADMVKALQTNSINEFKRFYRSLNALLIDDIQFFAGKDRSQEEFFHTFNALLEGQQQIILTSDRYPKEIEGMEERLKSRFGWGLTVAVEPPELETRVAILISKAEQSNIELPYEVAFFIAKRIRSNVRELEGALRRVIANAHFTGKPITIEFVHEALRDLLALQDKLVTIENIQKTVAEYYKVKVADLLSKRRSRSIARPRQMAMALSKELTNHSLPEIGDHFGGKDHTTVIHACRKVKELIQDDSDFAEDYKNLMRILSS</sequence>
<accession>Q5X990</accession>
<reference key="1">
    <citation type="journal article" date="2004" name="Nat. Genet.">
        <title>Evidence in the Legionella pneumophila genome for exploitation of host cell functions and high genome plasticity.</title>
        <authorList>
            <person name="Cazalet C."/>
            <person name="Rusniok C."/>
            <person name="Brueggemann H."/>
            <person name="Zidane N."/>
            <person name="Magnier A."/>
            <person name="Ma L."/>
            <person name="Tichit M."/>
            <person name="Jarraud S."/>
            <person name="Bouchier C."/>
            <person name="Vandenesch F."/>
            <person name="Kunst F."/>
            <person name="Etienne J."/>
            <person name="Glaser P."/>
            <person name="Buchrieser C."/>
        </authorList>
    </citation>
    <scope>NUCLEOTIDE SEQUENCE [LARGE SCALE GENOMIC DNA]</scope>
    <source>
        <strain>Paris</strain>
    </source>
</reference>
<feature type="chain" id="PRO_0000114195" description="Chromosomal replication initiator protein DnaA">
    <location>
        <begin position="1"/>
        <end position="452"/>
    </location>
</feature>
<feature type="region of interest" description="Domain I, interacts with DnaA modulators" evidence="1">
    <location>
        <begin position="1"/>
        <end position="85"/>
    </location>
</feature>
<feature type="region of interest" description="Domain II" evidence="1">
    <location>
        <begin position="85"/>
        <end position="115"/>
    </location>
</feature>
<feature type="region of interest" description="Domain III, AAA+ region" evidence="1">
    <location>
        <begin position="116"/>
        <end position="332"/>
    </location>
</feature>
<feature type="region of interest" description="Domain IV, binds dsDNA" evidence="1">
    <location>
        <begin position="333"/>
        <end position="452"/>
    </location>
</feature>
<feature type="binding site" evidence="1">
    <location>
        <position position="160"/>
    </location>
    <ligand>
        <name>ATP</name>
        <dbReference type="ChEBI" id="CHEBI:30616"/>
    </ligand>
</feature>
<feature type="binding site" evidence="1">
    <location>
        <position position="162"/>
    </location>
    <ligand>
        <name>ATP</name>
        <dbReference type="ChEBI" id="CHEBI:30616"/>
    </ligand>
</feature>
<feature type="binding site" evidence="1">
    <location>
        <position position="163"/>
    </location>
    <ligand>
        <name>ATP</name>
        <dbReference type="ChEBI" id="CHEBI:30616"/>
    </ligand>
</feature>
<feature type="binding site" evidence="1">
    <location>
        <position position="164"/>
    </location>
    <ligand>
        <name>ATP</name>
        <dbReference type="ChEBI" id="CHEBI:30616"/>
    </ligand>
</feature>
<evidence type="ECO:0000255" key="1">
    <source>
        <dbReference type="HAMAP-Rule" id="MF_00377"/>
    </source>
</evidence>
<name>DNAA_LEGPA</name>
<proteinExistence type="inferred from homology"/>